<evidence type="ECO:0000255" key="1">
    <source>
        <dbReference type="HAMAP-Rule" id="MF_04078"/>
    </source>
</evidence>
<organismHost>
    <name type="scientific">Homo sapiens</name>
    <name type="common">Human</name>
    <dbReference type="NCBI Taxonomy" id="9606"/>
</organismHost>
<reference key="1">
    <citation type="journal article" date="2000" name="AIDS Res. Hum. Retroviruses">
        <title>Near-full-length genome sequencing of divergent African HIV type 1 subtype F viruses leads to the identification of a new HIV type 1 subtype designated K.</title>
        <authorList>
            <person name="Triques K."/>
            <person name="Bourgeois A."/>
            <person name="Vidale N."/>
            <person name="Mpoudi-Ngole E."/>
            <person name="Mulanga-Kabeya C."/>
            <person name="Nzilambi N."/>
            <person name="Torimiro N."/>
            <person name="Saman E."/>
            <person name="Delaporte E."/>
            <person name="Peeters M."/>
        </authorList>
    </citation>
    <scope>NUCLEOTIDE SEQUENCE [GENOMIC RNA]</scope>
</reference>
<feature type="initiator methionine" description="Removed; by host" evidence="1">
    <location>
        <position position="1"/>
    </location>
</feature>
<feature type="chain" id="PRO_0000244793" description="Protein Nef" evidence="1">
    <location>
        <begin position="2"/>
        <end position="206"/>
    </location>
</feature>
<feature type="chain" id="PRO_0000244794" description="C-terminal core protein" evidence="1">
    <location>
        <begin position="58"/>
        <end position="206"/>
    </location>
</feature>
<feature type="region of interest" description="Acidic; interacts with host PACS1 and PACS2; stabilizes the interaction of NEF/MHC-I with host AP1M1; necessary for MHC-I internalization" evidence="1">
    <location>
        <begin position="62"/>
        <end position="65"/>
    </location>
</feature>
<feature type="region of interest" description="SH3-binding; interaction with Src family tyrosine kinases" evidence="1">
    <location>
        <begin position="69"/>
        <end position="78"/>
    </location>
</feature>
<feature type="region of interest" description="Mediates dimerization, Nef-PTE1 interaction" evidence="1">
    <location>
        <begin position="108"/>
        <end position="124"/>
    </location>
</feature>
<feature type="region of interest" description="Binding to ATP6V1H" evidence="1">
    <location>
        <begin position="148"/>
        <end position="180"/>
    </location>
</feature>
<feature type="short sequence motif" description="PxxP; stabilizes the interaction of NEF/MHC-I with host AP1M1; necessary for MHC-I internalization" evidence="1">
    <location>
        <begin position="72"/>
        <end position="75"/>
    </location>
</feature>
<feature type="short sequence motif" description="Dileucine internalization motif; necessary for CD4 internalization" evidence="1">
    <location>
        <begin position="164"/>
        <end position="165"/>
    </location>
</feature>
<feature type="short sequence motif" description="Diacidic; necessary for CD4 internalization" evidence="1">
    <location>
        <begin position="174"/>
        <end position="175"/>
    </location>
</feature>
<feature type="site" description="Might play a role in AP-1 recruitment to the Nef-MHC-I complex" evidence="1">
    <location>
        <position position="20"/>
    </location>
</feature>
<feature type="site" description="Cleavage; by viral protease" evidence="1">
    <location>
        <begin position="57"/>
        <end position="58"/>
    </location>
</feature>
<feature type="modified residue" description="Phosphoserine; by host" evidence="1">
    <location>
        <position position="6"/>
    </location>
</feature>
<feature type="lipid moiety-binding region" description="N-myristoyl glycine; by host" evidence="1">
    <location>
        <position position="2"/>
    </location>
</feature>
<comment type="function">
    <text evidence="1">Factor of infectivity and pathogenicity, required for optimal virus replication. Alters numerous pathways of T-lymphocyte function and down-regulates immunity surface molecules in order to evade host defense and increase viral infectivity. Alters the functionality of other immunity cells, like dendritic cells, monocytes/macrophages and NK cells.</text>
</comment>
<comment type="function">
    <text evidence="1">In infected CD4(+) T-lymphocytes, down-regulates the surface MHC-I, mature MHC-II, CD4, CD28, CCR5 and CXCR4 molecules. Mediates internalization and degradation of host CD4 through the interaction of with the cytoplasmic tail of CD4, the recruitment of AP-2 (clathrin adapter protein complex 2), internalization through clathrin coated pits, and subsequent transport to endosomes and lysosomes for degradation. Diverts host MHC-I molecules to the trans-Golgi network-associated endosomal compartments by an endocytic pathway to finally target them for degradation. MHC-I down-regulation may involve AP-1 (clathrin adapter protein complex 1) or possibly Src family kinase-ZAP70/Syk-PI3K cascade recruited by PACS2. In consequence infected cells are masked for immune recognition by cytotoxic T-lymphocytes. Decreasing the number of immune receptors also prevents reinfection by more HIV particles (superinfection). Down-regulates host SERINC3 and SERINC5 thereby excluding these proteins from the viral particles. Virion infectivity is drastically higher when SERINC3 or SERINC5 are excluded from the viral envelope, because these host antiviral proteins impair the membrane fusion event necessary for subsequent virion penetration.</text>
</comment>
<comment type="function">
    <text evidence="1">Bypasses host T-cell signaling by inducing a transcriptional program nearly identical to that of anti-CD3 cell activation. Interaction with TCR-zeta chain up-regulates the Fas ligand (FasL). Increasing surface FasL molecules and decreasing surface MHC-I molecules on infected CD4(+) cells send attacking cytotoxic CD8+ T-lymphocytes into apoptosis.</text>
</comment>
<comment type="function">
    <text evidence="1">Plays a role in optimizing the host cell environment for viral replication without causing cell death by apoptosis. Protects the infected cells from apoptosis in order to keep them alive until the next virus generation is ready to strike. Inhibits the Fas and TNFR-mediated death signals by blocking MAP3K5/ASK1. Decreases the half-life of TP53, protecting the infected cell against p53-mediated apoptosis. Inhibits the apoptotic signals regulated by the Bcl-2 family proteins through the formation of a Nef/PI3-kinase/PAK2 complex that leads to activation of PAK2 and induces phosphorylation of host BAD.</text>
</comment>
<comment type="function">
    <text evidence="1">Extracellular Nef protein targets CD4(+) T-lymphocytes for apoptosis by interacting with CXCR4 surface receptors.</text>
</comment>
<comment type="subunit">
    <text evidence="1">Monomer; cytosolic form. Homodimer; membrane bound form. Interacts with Nef associated p21-activated kinase (PAK2); this interaction activates PAK2. Associates with the Nef-MHC-I-AP1 complex; this complex is required for MHC-I internalization. Interacts (via C-terminus) with host PI3-kinase. Interacts with host PACS1; this interaction seems to be weak. Interacts with host PACS2. Interacts with host LCK and MAPK3; these interactions inhibit the kinase activity of the latter. Interacts with host ATP6V1H; this interaction may play a role in CD4 endocytosis. Associates with the CD4-Nef-AP2 complex; this complex is required for CD4 internalization. Interacts with host AP2 subunit alpha and AP2 subunit sigma2. Interacts with TCR-zeta chain; this interaction up-regulates the Fas ligand (FasL) surface expression. Interacts with host HCK, LYN, and SRC; these interactions activate the Src family kinases. Interacts with MAP3K5; this interaction inhibits the Fas and TNFR-mediated death signals. Interacts with beta-COP and PTE1. Interacts with human RACK1; this increases Nef phosphorylation by PKC. Interacts with TP53; this interaction decreases the half-life of TP53, protecting the infected cell against p53-mediated apoptosis.</text>
</comment>
<comment type="subcellular location">
    <subcellularLocation>
        <location evidence="1">Host cell membrane</location>
        <topology evidence="1">Lipid-anchor</topology>
        <orientation evidence="1">Cytoplasmic side</orientation>
    </subcellularLocation>
    <subcellularLocation>
        <location evidence="1">Virion</location>
    </subcellularLocation>
    <subcellularLocation>
        <location evidence="1">Secreted</location>
    </subcellularLocation>
    <subcellularLocation>
        <location evidence="1">Host Golgi apparatus membrane</location>
    </subcellularLocation>
    <text evidence="1">TGN localization requires PACS1. Associates with the inner plasma membrane through its N-terminal domain. Nef stimulates its own export via the release of exosomes. Incorporated in virions at a rate of about 10 molecules per virion, where it is cleaved.</text>
</comment>
<comment type="induction">
    <text evidence="1">Expressed early in the viral replication cycle.</text>
</comment>
<comment type="domain">
    <text evidence="1">The N-terminal domain is composed of the N-myristoyl glycine and of a cluster of positively charged amino acids. It is required for inner plasma membrane targeting of Nef and virion incorporation, and thereby for infectivity. This domain is also involved in binding to TP53.</text>
</comment>
<comment type="domain">
    <text evidence="1">The SH3-binding domain constituted of PxxP motifs mediates binding to several Src family proteins thereby regulating their tyrosine kinase activity. The same motifs also mediates the association with MAPK3, PI3-kinase and TCR-zeta.</text>
</comment>
<comment type="domain">
    <text evidence="1">The dileucine internalization motif and a diacidic motif seem to be required for binding to AP-2.</text>
</comment>
<comment type="domain">
    <text evidence="1">The acidic region binds to the sorting protein PACS-2, which targets Nef to the paranuclear region, enabling the PxxP motif to direct assembly of an SFK/ZAP-70/PI3K complex that accelerates endocytosis of cell-surface MHC-I.</text>
</comment>
<comment type="PTM">
    <text evidence="1">The virion-associated Nef proteins are cleaved by the viral protease to release the soluble C-terminal core protein. Nef is probably cleaved concomitantly with viral structural proteins on maturation of virus particles.</text>
</comment>
<comment type="PTM">
    <text evidence="1">Myristoylated.</text>
</comment>
<comment type="PTM">
    <text evidence="1">Phosphorylated on serine residues, probably by host PKCdelta and theta.</text>
</comment>
<comment type="miscellaneous">
    <text evidence="1">HIV-1 lineages are divided in three main groups, M (for Major), O (for Outlier), and N (for New, or Non-M, Non-O). The vast majority of strains found worldwide belong to the group M. Group O seems to be endemic to and largely confined to Cameroon and neighboring countries in West Central Africa, where these viruses represent a small minority of HIV-1 strains. The group N is represented by a limited number of isolates from Cameroonian persons. The group M is further subdivided in 9 clades or subtypes (A to D, F to H, J and K).</text>
</comment>
<comment type="similarity">
    <text evidence="1">Belongs to the lentivirus primate group Nef protein family.</text>
</comment>
<comment type="sequence caution">
    <conflict type="erroneous initiation">
        <sequence resource="EMBL-CDS" id="CAB59010"/>
    </conflict>
</comment>
<accession>Q9QBZ7</accession>
<name>NEF_HV197</name>
<keyword id="KW-0014">AIDS</keyword>
<keyword id="KW-0053">Apoptosis</keyword>
<keyword id="KW-0244">Early protein</keyword>
<keyword id="KW-1032">Host cell membrane</keyword>
<keyword id="KW-1040">Host Golgi apparatus</keyword>
<keyword id="KW-1043">Host membrane</keyword>
<keyword id="KW-0945">Host-virus interaction</keyword>
<keyword id="KW-1080">Inhibition of host adaptive immune response by virus</keyword>
<keyword id="KW-1083">Inhibition of host autophagy by virus</keyword>
<keyword id="KW-1115">Inhibition of host MHC class I molecule presentation by virus</keyword>
<keyword id="KW-1116">Inhibition of host MHC class II molecule presentation by virus</keyword>
<keyword id="KW-0449">Lipoprotein</keyword>
<keyword id="KW-0472">Membrane</keyword>
<keyword id="KW-0519">Myristate</keyword>
<keyword id="KW-0597">Phosphoprotein</keyword>
<keyword id="KW-0964">Secreted</keyword>
<keyword id="KW-0729">SH3-binding</keyword>
<keyword id="KW-0899">Viral immunoevasion</keyword>
<keyword id="KW-0946">Virion</keyword>
<keyword id="KW-0843">Virulence</keyword>
<proteinExistence type="inferred from homology"/>
<gene>
    <name evidence="1" type="primary">nef</name>
</gene>
<sequence length="206" mass="23561">MGGKWSKSSIVGWSTVRERMRKTPPAADGVGAVSQDLDKHGAVTSSNTAFNNPDCAWLEAQEDEDVGFPVRPQVPLRPMTFKGAFDLGFFLKEKGGLDGLIYSKRRQEILDLWVYHTQGFFPDWQNYTPGPGIRYPLTFGWCYKLVPVDPREVEEATEGENNCLLHPVNQHGMEDEHREVLKWKFDSSLARKHVAREMHPEYYKDC</sequence>
<dbReference type="EMBL" id="AJ249235">
    <property type="protein sequence ID" value="CAB59010.1"/>
    <property type="status" value="ALT_INIT"/>
    <property type="molecule type" value="Genomic_RNA"/>
</dbReference>
<dbReference type="SMR" id="Q9QBZ7"/>
<dbReference type="Proteomes" id="UP000100183">
    <property type="component" value="Segment"/>
</dbReference>
<dbReference type="GO" id="GO:0005576">
    <property type="term" value="C:extracellular region"/>
    <property type="evidence" value="ECO:0007669"/>
    <property type="project" value="UniProtKB-SubCell"/>
</dbReference>
<dbReference type="GO" id="GO:0044178">
    <property type="term" value="C:host cell Golgi membrane"/>
    <property type="evidence" value="ECO:0007669"/>
    <property type="project" value="UniProtKB-SubCell"/>
</dbReference>
<dbReference type="GO" id="GO:0020002">
    <property type="term" value="C:host cell plasma membrane"/>
    <property type="evidence" value="ECO:0007669"/>
    <property type="project" value="UniProtKB-SubCell"/>
</dbReference>
<dbReference type="GO" id="GO:0016020">
    <property type="term" value="C:membrane"/>
    <property type="evidence" value="ECO:0007669"/>
    <property type="project" value="UniProtKB-UniRule"/>
</dbReference>
<dbReference type="GO" id="GO:0044423">
    <property type="term" value="C:virion component"/>
    <property type="evidence" value="ECO:0007669"/>
    <property type="project" value="UniProtKB-UniRule"/>
</dbReference>
<dbReference type="GO" id="GO:0005525">
    <property type="term" value="F:GTP binding"/>
    <property type="evidence" value="ECO:0007669"/>
    <property type="project" value="UniProtKB-UniRule"/>
</dbReference>
<dbReference type="GO" id="GO:0017124">
    <property type="term" value="F:SH3 domain binding"/>
    <property type="evidence" value="ECO:0007669"/>
    <property type="project" value="UniProtKB-UniRule"/>
</dbReference>
<dbReference type="GO" id="GO:0046776">
    <property type="term" value="P:symbiont-mediated suppression of host antigen processing and presentation of peptide antigen via MHC class I"/>
    <property type="evidence" value="ECO:0007669"/>
    <property type="project" value="UniProtKB-UniRule"/>
</dbReference>
<dbReference type="GO" id="GO:0039505">
    <property type="term" value="P:symbiont-mediated suppression of host antigen processing and presentation of peptide antigen via MHC class II"/>
    <property type="evidence" value="ECO:0007669"/>
    <property type="project" value="UniProtKB-UniRule"/>
</dbReference>
<dbReference type="GO" id="GO:0140321">
    <property type="term" value="P:symbiont-mediated suppression of host autophagy"/>
    <property type="evidence" value="ECO:0007669"/>
    <property type="project" value="UniProtKB-KW"/>
</dbReference>
<dbReference type="Gene3D" id="4.10.890.10">
    <property type="entry name" value="HIV 1 nef anchor domain"/>
    <property type="match status" value="1"/>
</dbReference>
<dbReference type="Gene3D" id="3.30.62.10">
    <property type="entry name" value="Nef Regulatory Factor"/>
    <property type="match status" value="1"/>
</dbReference>
<dbReference type="HAMAP" id="MF_04078">
    <property type="entry name" value="NEF_HIV"/>
    <property type="match status" value="1"/>
</dbReference>
<dbReference type="InterPro" id="IPR027480">
    <property type="entry name" value="HIV-1_Nef_anchor_sf"/>
</dbReference>
<dbReference type="InterPro" id="IPR027481">
    <property type="entry name" value="HIV-1_Nef_core_sf"/>
</dbReference>
<dbReference type="InterPro" id="IPR001558">
    <property type="entry name" value="HIV_Nef"/>
</dbReference>
<dbReference type="Pfam" id="PF00469">
    <property type="entry name" value="F-protein"/>
    <property type="match status" value="1"/>
</dbReference>
<dbReference type="SUPFAM" id="SSF55671">
    <property type="entry name" value="Regulatory factor Nef"/>
    <property type="match status" value="1"/>
</dbReference>
<protein>
    <recommendedName>
        <fullName evidence="1">Protein Nef</fullName>
    </recommendedName>
    <alternativeName>
        <fullName evidence="1">3'ORF</fullName>
    </alternativeName>
    <alternativeName>
        <fullName evidence="1">Negative factor</fullName>
        <shortName evidence="1">F-protein</shortName>
    </alternativeName>
    <component>
        <recommendedName>
            <fullName evidence="1">C-terminal core protein</fullName>
        </recommendedName>
    </component>
</protein>
<organism>
    <name type="scientific">Human immunodeficiency virus type 1 group M subtype K (isolate 97ZR-EQTB11)</name>
    <name type="common">HIV-1</name>
    <dbReference type="NCBI Taxonomy" id="388907"/>
    <lineage>
        <taxon>Viruses</taxon>
        <taxon>Riboviria</taxon>
        <taxon>Pararnavirae</taxon>
        <taxon>Artverviricota</taxon>
        <taxon>Revtraviricetes</taxon>
        <taxon>Ortervirales</taxon>
        <taxon>Retroviridae</taxon>
        <taxon>Orthoretrovirinae</taxon>
        <taxon>Lentivirus</taxon>
        <taxon>Human immunodeficiency virus type 1</taxon>
    </lineage>
</organism>